<sequence length="161" mass="18321">MSRVCHKLEDFMRQRRIAREIALQVLYSLEVVEMEAGEAIELYWAHYEAPMDARPFSSLLIEGAWKHRDQIDSLIGGCSANWSIARMSKVDKSILRMAVFELCFCEDIPPKVTMNEAIDLGKVYGSENSGSFINGILDALYAKIHKKNDEQEIAPPPERSE</sequence>
<keyword id="KW-1185">Reference proteome</keyword>
<keyword id="KW-0694">RNA-binding</keyword>
<keyword id="KW-0804">Transcription</keyword>
<keyword id="KW-0889">Transcription antitermination</keyword>
<keyword id="KW-0805">Transcription regulation</keyword>
<comment type="function">
    <text evidence="1">Involved in transcription antitermination. Required for transcription of ribosomal RNA (rRNA) genes. Binds specifically to the boxA antiterminator sequence of the ribosomal RNA (rrn) operons.</text>
</comment>
<comment type="similarity">
    <text evidence="1">Belongs to the NusB family.</text>
</comment>
<protein>
    <recommendedName>
        <fullName evidence="1">Transcription antitermination protein NusB</fullName>
    </recommendedName>
    <alternativeName>
        <fullName evidence="1">Antitermination factor NusB</fullName>
    </alternativeName>
</protein>
<evidence type="ECO:0000255" key="1">
    <source>
        <dbReference type="HAMAP-Rule" id="MF_00073"/>
    </source>
</evidence>
<feature type="chain" id="PRO_0000265615" description="Transcription antitermination protein NusB">
    <location>
        <begin position="1"/>
        <end position="161"/>
    </location>
</feature>
<organism>
    <name type="scientific">Syntrophus aciditrophicus (strain SB)</name>
    <dbReference type="NCBI Taxonomy" id="56780"/>
    <lineage>
        <taxon>Bacteria</taxon>
        <taxon>Pseudomonadati</taxon>
        <taxon>Thermodesulfobacteriota</taxon>
        <taxon>Syntrophia</taxon>
        <taxon>Syntrophales</taxon>
        <taxon>Syntrophaceae</taxon>
        <taxon>Syntrophus</taxon>
    </lineage>
</organism>
<gene>
    <name evidence="1" type="primary">nusB</name>
    <name type="ordered locus">SYNAS_01800</name>
    <name type="ORF">SYN_02373</name>
</gene>
<reference key="1">
    <citation type="journal article" date="2007" name="Proc. Natl. Acad. Sci. U.S.A.">
        <title>The genome of Syntrophus aciditrophicus: life at the thermodynamic limit of microbial growth.</title>
        <authorList>
            <person name="McInerney M.J."/>
            <person name="Rohlin L."/>
            <person name="Mouttaki H."/>
            <person name="Kim U."/>
            <person name="Krupp R.S."/>
            <person name="Rios-Hernandez L."/>
            <person name="Sieber J."/>
            <person name="Struchtemeyer C.G."/>
            <person name="Bhattacharyya A."/>
            <person name="Campbell J.W."/>
            <person name="Gunsalus R.P."/>
        </authorList>
    </citation>
    <scope>NUCLEOTIDE SEQUENCE [LARGE SCALE GENOMIC DNA]</scope>
    <source>
        <strain>SB</strain>
    </source>
</reference>
<accession>Q2LQK4</accession>
<proteinExistence type="inferred from homology"/>
<dbReference type="EMBL" id="CP000252">
    <property type="protein sequence ID" value="ABC76059.1"/>
    <property type="molecule type" value="Genomic_DNA"/>
</dbReference>
<dbReference type="SMR" id="Q2LQK4"/>
<dbReference type="FunCoup" id="Q2LQK4">
    <property type="interactions" value="343"/>
</dbReference>
<dbReference type="STRING" id="56780.SYN_02373"/>
<dbReference type="KEGG" id="sat:SYN_02373"/>
<dbReference type="eggNOG" id="COG0781">
    <property type="taxonomic scope" value="Bacteria"/>
</dbReference>
<dbReference type="HOGENOM" id="CLU_087843_3_3_7"/>
<dbReference type="InParanoid" id="Q2LQK4"/>
<dbReference type="OrthoDB" id="9797817at2"/>
<dbReference type="Proteomes" id="UP000001933">
    <property type="component" value="Chromosome"/>
</dbReference>
<dbReference type="GO" id="GO:0005829">
    <property type="term" value="C:cytosol"/>
    <property type="evidence" value="ECO:0007669"/>
    <property type="project" value="TreeGrafter"/>
</dbReference>
<dbReference type="GO" id="GO:0003723">
    <property type="term" value="F:RNA binding"/>
    <property type="evidence" value="ECO:0007669"/>
    <property type="project" value="UniProtKB-UniRule"/>
</dbReference>
<dbReference type="GO" id="GO:0006353">
    <property type="term" value="P:DNA-templated transcription termination"/>
    <property type="evidence" value="ECO:0007669"/>
    <property type="project" value="UniProtKB-UniRule"/>
</dbReference>
<dbReference type="GO" id="GO:0031564">
    <property type="term" value="P:transcription antitermination"/>
    <property type="evidence" value="ECO:0007669"/>
    <property type="project" value="UniProtKB-KW"/>
</dbReference>
<dbReference type="CDD" id="cd00619">
    <property type="entry name" value="Terminator_NusB"/>
    <property type="match status" value="1"/>
</dbReference>
<dbReference type="Gene3D" id="1.10.940.10">
    <property type="entry name" value="NusB-like"/>
    <property type="match status" value="1"/>
</dbReference>
<dbReference type="HAMAP" id="MF_00073">
    <property type="entry name" value="NusB"/>
    <property type="match status" value="1"/>
</dbReference>
<dbReference type="InterPro" id="IPR035926">
    <property type="entry name" value="NusB-like_sf"/>
</dbReference>
<dbReference type="InterPro" id="IPR011605">
    <property type="entry name" value="NusB_fam"/>
</dbReference>
<dbReference type="InterPro" id="IPR006027">
    <property type="entry name" value="NusB_RsmB_TIM44"/>
</dbReference>
<dbReference type="NCBIfam" id="TIGR01951">
    <property type="entry name" value="nusB"/>
    <property type="match status" value="1"/>
</dbReference>
<dbReference type="PANTHER" id="PTHR11078:SF3">
    <property type="entry name" value="ANTITERMINATION NUSB DOMAIN-CONTAINING PROTEIN"/>
    <property type="match status" value="1"/>
</dbReference>
<dbReference type="PANTHER" id="PTHR11078">
    <property type="entry name" value="N UTILIZATION SUBSTANCE PROTEIN B-RELATED"/>
    <property type="match status" value="1"/>
</dbReference>
<dbReference type="Pfam" id="PF01029">
    <property type="entry name" value="NusB"/>
    <property type="match status" value="1"/>
</dbReference>
<dbReference type="SUPFAM" id="SSF48013">
    <property type="entry name" value="NusB-like"/>
    <property type="match status" value="1"/>
</dbReference>
<name>NUSB_SYNAS</name>